<proteinExistence type="inferred from homology"/>
<protein>
    <recommendedName>
        <fullName>Phosphocarrier protein HPr</fullName>
    </recommendedName>
    <alternativeName>
        <fullName>Histidine-containing protein</fullName>
    </alternativeName>
</protein>
<feature type="chain" id="PRO_0000107863" description="Phosphocarrier protein HPr">
    <location>
        <begin position="1"/>
        <end position="88"/>
    </location>
</feature>
<feature type="domain" description="HPr" evidence="2">
    <location>
        <begin position="1"/>
        <end position="88"/>
    </location>
</feature>
<feature type="active site" description="Pros-phosphohistidine intermediate" evidence="2">
    <location>
        <position position="15"/>
    </location>
</feature>
<feature type="modified residue" description="Phosphoserine; by HPrK/P" evidence="2">
    <location>
        <position position="47"/>
    </location>
</feature>
<sequence>MKKFQAVIKDPVGIHARPASILASEASKFKSELKLVAPSGVEGNIKSIINLMSLGIRHNDNITIKADGADEEEALAAIKACLEKNKVI</sequence>
<comment type="function">
    <text evidence="1">General (non sugar-specific) component of the phosphoenolpyruvate-dependent sugar phosphotransferase system (sugar PTS). This major carbohydrate active-transport system catalyzes the phosphorylation of incoming sugar substrates concomitantly with their translocation across the cell membrane. The phosphoryl group from phosphoenolpyruvate (PEP) is transferred to the phosphoryl carrier protein HPr by enzyme I. Phospho-HPr then transfers it to the PTS EIIA domain.</text>
</comment>
<comment type="function">
    <text evidence="1">P-Ser-HPr interacts with the catabolite control protein A (CcpA), forming a complex that binds to DNA at the catabolite response elements cre, operator sites preceding a large number of catabolite-regulated genes. Thus, P-Ser-HPr is a corepressor in carbon catabolite repression (CCR), a mechanism that allows bacteria to coordinate and optimize the utilization of available carbon sources. P-Ser-HPr also plays a role in inducer exclusion, in which it probably interacts with several non-PTS permeases and inhibits their transport activity (By similarity).</text>
</comment>
<comment type="activity regulation">
    <text evidence="1">Phosphorylation on Ser-47 inhibits the phosphoryl transfer from enzyme I to HPr.</text>
</comment>
<comment type="subcellular location">
    <subcellularLocation>
        <location evidence="1">Cytoplasm</location>
    </subcellularLocation>
</comment>
<comment type="similarity">
    <text evidence="3">Belongs to the HPr family.</text>
</comment>
<name>PTHP_MYCGE</name>
<evidence type="ECO:0000250" key="1"/>
<evidence type="ECO:0000255" key="2">
    <source>
        <dbReference type="PROSITE-ProRule" id="PRU00681"/>
    </source>
</evidence>
<evidence type="ECO:0000305" key="3"/>
<keyword id="KW-0963">Cytoplasm</keyword>
<keyword id="KW-0597">Phosphoprotein</keyword>
<keyword id="KW-0598">Phosphotransferase system</keyword>
<keyword id="KW-1185">Reference proteome</keyword>
<keyword id="KW-0762">Sugar transport</keyword>
<keyword id="KW-0804">Transcription</keyword>
<keyword id="KW-0805">Transcription regulation</keyword>
<keyword id="KW-0813">Transport</keyword>
<organism>
    <name type="scientific">Mycoplasma genitalium (strain ATCC 33530 / DSM 19775 / NCTC 10195 / G37)</name>
    <name type="common">Mycoplasmoides genitalium</name>
    <dbReference type="NCBI Taxonomy" id="243273"/>
    <lineage>
        <taxon>Bacteria</taxon>
        <taxon>Bacillati</taxon>
        <taxon>Mycoplasmatota</taxon>
        <taxon>Mycoplasmoidales</taxon>
        <taxon>Mycoplasmoidaceae</taxon>
        <taxon>Mycoplasmoides</taxon>
    </lineage>
</organism>
<gene>
    <name type="primary">ptsH</name>
    <name type="ordered locus">MG041</name>
</gene>
<reference key="1">
    <citation type="journal article" date="1995" name="Science">
        <title>The minimal gene complement of Mycoplasma genitalium.</title>
        <authorList>
            <person name="Fraser C.M."/>
            <person name="Gocayne J.D."/>
            <person name="White O."/>
            <person name="Adams M.D."/>
            <person name="Clayton R.A."/>
            <person name="Fleischmann R.D."/>
            <person name="Bult C.J."/>
            <person name="Kerlavage A.R."/>
            <person name="Sutton G.G."/>
            <person name="Kelley J.M."/>
            <person name="Fritchman J.L."/>
            <person name="Weidman J.F."/>
            <person name="Small K.V."/>
            <person name="Sandusky M."/>
            <person name="Fuhrmann J.L."/>
            <person name="Nguyen D.T."/>
            <person name="Utterback T.R."/>
            <person name="Saudek D.M."/>
            <person name="Phillips C.A."/>
            <person name="Merrick J.M."/>
            <person name="Tomb J.-F."/>
            <person name="Dougherty B.A."/>
            <person name="Bott K.F."/>
            <person name="Hu P.-C."/>
            <person name="Lucier T.S."/>
            <person name="Peterson S.N."/>
            <person name="Smith H.O."/>
            <person name="Hutchison C.A. III"/>
            <person name="Venter J.C."/>
        </authorList>
    </citation>
    <scope>NUCLEOTIDE SEQUENCE [LARGE SCALE GENOMIC DNA]</scope>
    <source>
        <strain>ATCC 33530 / DSM 19775 / NCTC 10195 / G37</strain>
    </source>
</reference>
<reference key="2">
    <citation type="journal article" date="1996" name="Microb. Comp. Genomics">
        <title>Novel phosphotransferase system genes revealed by bacterial genome analysis: the complete complement of pts genes in Mycoplasma genitalium.</title>
        <authorList>
            <person name="Reizer J."/>
            <person name="Paulsen I.T."/>
            <person name="Reizer A."/>
            <person name="Titgemeyer F."/>
            <person name="Saier M.H. Jr."/>
        </authorList>
    </citation>
    <scope>DISCUSSION OF SEQUENCE</scope>
</reference>
<accession>P47287</accession>
<dbReference type="EMBL" id="L43967">
    <property type="protein sequence ID" value="AAC71257.1"/>
    <property type="molecule type" value="Genomic_DNA"/>
</dbReference>
<dbReference type="PIR" id="E64204">
    <property type="entry name" value="E64204"/>
</dbReference>
<dbReference type="RefSeq" id="WP_010869302.1">
    <property type="nucleotide sequence ID" value="NC_000908.2"/>
</dbReference>
<dbReference type="SMR" id="P47287"/>
<dbReference type="FunCoup" id="P47287">
    <property type="interactions" value="74"/>
</dbReference>
<dbReference type="STRING" id="243273.MG_041"/>
<dbReference type="GeneID" id="88282156"/>
<dbReference type="KEGG" id="mge:MG_041"/>
<dbReference type="eggNOG" id="COG1925">
    <property type="taxonomic scope" value="Bacteria"/>
</dbReference>
<dbReference type="HOGENOM" id="CLU_136230_2_0_14"/>
<dbReference type="InParanoid" id="P47287"/>
<dbReference type="OrthoDB" id="9809047at2"/>
<dbReference type="BioCyc" id="MGEN243273:G1GJ2-41-MONOMER"/>
<dbReference type="Proteomes" id="UP000000807">
    <property type="component" value="Chromosome"/>
</dbReference>
<dbReference type="GO" id="GO:0005737">
    <property type="term" value="C:cytoplasm"/>
    <property type="evidence" value="ECO:0007669"/>
    <property type="project" value="UniProtKB-SubCell"/>
</dbReference>
<dbReference type="GO" id="GO:0009401">
    <property type="term" value="P:phosphoenolpyruvate-dependent sugar phosphotransferase system"/>
    <property type="evidence" value="ECO:0000318"/>
    <property type="project" value="GO_Central"/>
</dbReference>
<dbReference type="CDD" id="cd00367">
    <property type="entry name" value="PTS-HPr_like"/>
    <property type="match status" value="1"/>
</dbReference>
<dbReference type="Gene3D" id="3.30.1340.10">
    <property type="entry name" value="HPr-like"/>
    <property type="match status" value="1"/>
</dbReference>
<dbReference type="InterPro" id="IPR050399">
    <property type="entry name" value="HPr"/>
</dbReference>
<dbReference type="InterPro" id="IPR000032">
    <property type="entry name" value="HPr-like"/>
</dbReference>
<dbReference type="InterPro" id="IPR035895">
    <property type="entry name" value="HPr-like_sf"/>
</dbReference>
<dbReference type="InterPro" id="IPR001020">
    <property type="entry name" value="PTS_HPr_His_P_site"/>
</dbReference>
<dbReference type="InterPro" id="IPR002114">
    <property type="entry name" value="PTS_HPr_Ser_P_site"/>
</dbReference>
<dbReference type="NCBIfam" id="TIGR01003">
    <property type="entry name" value="PTS_HPr_family"/>
    <property type="match status" value="1"/>
</dbReference>
<dbReference type="PANTHER" id="PTHR33705">
    <property type="entry name" value="PHOSPHOCARRIER PROTEIN HPR"/>
    <property type="match status" value="1"/>
</dbReference>
<dbReference type="PANTHER" id="PTHR33705:SF2">
    <property type="entry name" value="PHOSPHOCARRIER PROTEIN NPR"/>
    <property type="match status" value="1"/>
</dbReference>
<dbReference type="Pfam" id="PF00381">
    <property type="entry name" value="PTS-HPr"/>
    <property type="match status" value="1"/>
</dbReference>
<dbReference type="PRINTS" id="PR00107">
    <property type="entry name" value="PHOSPHOCPHPR"/>
</dbReference>
<dbReference type="SUPFAM" id="SSF55594">
    <property type="entry name" value="HPr-like"/>
    <property type="match status" value="1"/>
</dbReference>
<dbReference type="PROSITE" id="PS51350">
    <property type="entry name" value="PTS_HPR_DOM"/>
    <property type="match status" value="1"/>
</dbReference>
<dbReference type="PROSITE" id="PS00369">
    <property type="entry name" value="PTS_HPR_HIS"/>
    <property type="match status" value="1"/>
</dbReference>
<dbReference type="PROSITE" id="PS00589">
    <property type="entry name" value="PTS_HPR_SER"/>
    <property type="match status" value="1"/>
</dbReference>